<gene>
    <name type="ordered locus">Rv1519</name>
    <name type="ORF">MTCY19G5.09c</name>
</gene>
<name>Y1519_MYCTU</name>
<protein>
    <recommendedName>
        <fullName>Uncharacterized protein Rv1519</fullName>
    </recommendedName>
</protein>
<proteinExistence type="predicted"/>
<sequence>MRCGCLACDGVLCANGPGRPRRPALTCTAVATRTLHSLATNAELVESADLTVTEDICSRIVSLPVHDHMAIADVARVVAPFGEGLARGG</sequence>
<keyword id="KW-1185">Reference proteome</keyword>
<feature type="chain" id="PRO_0000103866" description="Uncharacterized protein Rv1519">
    <location>
        <begin position="1"/>
        <end position="89"/>
    </location>
</feature>
<comment type="similarity">
    <text evidence="1">To M.tuberculosis Rv3402c.</text>
</comment>
<dbReference type="EMBL" id="AL123456">
    <property type="protein sequence ID" value="CCP44283.1"/>
    <property type="molecule type" value="Genomic_DNA"/>
</dbReference>
<dbReference type="PIR" id="G70722">
    <property type="entry name" value="G70722"/>
</dbReference>
<dbReference type="RefSeq" id="NP_216035.1">
    <property type="nucleotide sequence ID" value="NC_000962.3"/>
</dbReference>
<dbReference type="RefSeq" id="WP_003407656.1">
    <property type="nucleotide sequence ID" value="NC_000962.3"/>
</dbReference>
<dbReference type="SMR" id="P9WLV7"/>
<dbReference type="STRING" id="83332.Rv1519"/>
<dbReference type="PaxDb" id="83332-Rv1519"/>
<dbReference type="DNASU" id="886453"/>
<dbReference type="GeneID" id="886453"/>
<dbReference type="KEGG" id="mtu:Rv1519"/>
<dbReference type="KEGG" id="mtv:RVBD_1519"/>
<dbReference type="TubercuList" id="Rv1519"/>
<dbReference type="eggNOG" id="COG0399">
    <property type="taxonomic scope" value="Bacteria"/>
</dbReference>
<dbReference type="InParanoid" id="P9WLV7"/>
<dbReference type="OrthoDB" id="9804264at2"/>
<dbReference type="Proteomes" id="UP000001584">
    <property type="component" value="Chromosome"/>
</dbReference>
<dbReference type="Gene3D" id="3.90.1150.10">
    <property type="entry name" value="Aspartate Aminotransferase, domain 1"/>
    <property type="match status" value="1"/>
</dbReference>
<dbReference type="InterPro" id="IPR000653">
    <property type="entry name" value="DegT/StrS_aminotransferase"/>
</dbReference>
<dbReference type="InterPro" id="IPR015422">
    <property type="entry name" value="PyrdxlP-dep_Trfase_small"/>
</dbReference>
<dbReference type="Pfam" id="PF01041">
    <property type="entry name" value="DegT_DnrJ_EryC1"/>
    <property type="match status" value="1"/>
</dbReference>
<organism>
    <name type="scientific">Mycobacterium tuberculosis (strain ATCC 25618 / H37Rv)</name>
    <dbReference type="NCBI Taxonomy" id="83332"/>
    <lineage>
        <taxon>Bacteria</taxon>
        <taxon>Bacillati</taxon>
        <taxon>Actinomycetota</taxon>
        <taxon>Actinomycetes</taxon>
        <taxon>Mycobacteriales</taxon>
        <taxon>Mycobacteriaceae</taxon>
        <taxon>Mycobacterium</taxon>
        <taxon>Mycobacterium tuberculosis complex</taxon>
    </lineage>
</organism>
<reference key="1">
    <citation type="journal article" date="1998" name="Nature">
        <title>Deciphering the biology of Mycobacterium tuberculosis from the complete genome sequence.</title>
        <authorList>
            <person name="Cole S.T."/>
            <person name="Brosch R."/>
            <person name="Parkhill J."/>
            <person name="Garnier T."/>
            <person name="Churcher C.M."/>
            <person name="Harris D.E."/>
            <person name="Gordon S.V."/>
            <person name="Eiglmeier K."/>
            <person name="Gas S."/>
            <person name="Barry C.E. III"/>
            <person name="Tekaia F."/>
            <person name="Badcock K."/>
            <person name="Basham D."/>
            <person name="Brown D."/>
            <person name="Chillingworth T."/>
            <person name="Connor R."/>
            <person name="Davies R.M."/>
            <person name="Devlin K."/>
            <person name="Feltwell T."/>
            <person name="Gentles S."/>
            <person name="Hamlin N."/>
            <person name="Holroyd S."/>
            <person name="Hornsby T."/>
            <person name="Jagels K."/>
            <person name="Krogh A."/>
            <person name="McLean J."/>
            <person name="Moule S."/>
            <person name="Murphy L.D."/>
            <person name="Oliver S."/>
            <person name="Osborne J."/>
            <person name="Quail M.A."/>
            <person name="Rajandream M.A."/>
            <person name="Rogers J."/>
            <person name="Rutter S."/>
            <person name="Seeger K."/>
            <person name="Skelton S."/>
            <person name="Squares S."/>
            <person name="Squares R."/>
            <person name="Sulston J.E."/>
            <person name="Taylor K."/>
            <person name="Whitehead S."/>
            <person name="Barrell B.G."/>
        </authorList>
    </citation>
    <scope>NUCLEOTIDE SEQUENCE [LARGE SCALE GENOMIC DNA]</scope>
    <source>
        <strain>ATCC 25618 / H37Rv</strain>
    </source>
</reference>
<accession>P9WLV7</accession>
<accession>L0T9V5</accession>
<accession>P64861</accession>
<accession>Q50588</accession>
<evidence type="ECO:0000305" key="1"/>